<evidence type="ECO:0000255" key="1">
    <source>
        <dbReference type="HAMAP-Rule" id="MF_00366"/>
    </source>
</evidence>
<accession>B5BI24</accession>
<name>RPOZ_SALPK</name>
<sequence length="91" mass="10237">MARVTVQDAVEKIGNRFDLVLVAARRARQMQVGGKDPLVPEENDKTTVIALREIEEGLINNQILDVRERQEQQEQEAAELQAVTAIAEGRR</sequence>
<feature type="chain" id="PRO_1000121270" description="DNA-directed RNA polymerase subunit omega">
    <location>
        <begin position="1"/>
        <end position="91"/>
    </location>
</feature>
<dbReference type="EC" id="2.7.7.6" evidence="1"/>
<dbReference type="EMBL" id="FM200053">
    <property type="protein sequence ID" value="CAR61622.1"/>
    <property type="molecule type" value="Genomic_DNA"/>
</dbReference>
<dbReference type="RefSeq" id="WP_000135058.1">
    <property type="nucleotide sequence ID" value="NC_011147.1"/>
</dbReference>
<dbReference type="SMR" id="B5BI24"/>
<dbReference type="GeneID" id="98390719"/>
<dbReference type="KEGG" id="sek:SSPA3356"/>
<dbReference type="HOGENOM" id="CLU_125406_5_3_6"/>
<dbReference type="Proteomes" id="UP000001869">
    <property type="component" value="Chromosome"/>
</dbReference>
<dbReference type="GO" id="GO:0000428">
    <property type="term" value="C:DNA-directed RNA polymerase complex"/>
    <property type="evidence" value="ECO:0007669"/>
    <property type="project" value="UniProtKB-KW"/>
</dbReference>
<dbReference type="GO" id="GO:0003677">
    <property type="term" value="F:DNA binding"/>
    <property type="evidence" value="ECO:0007669"/>
    <property type="project" value="UniProtKB-UniRule"/>
</dbReference>
<dbReference type="GO" id="GO:0003899">
    <property type="term" value="F:DNA-directed RNA polymerase activity"/>
    <property type="evidence" value="ECO:0007669"/>
    <property type="project" value="UniProtKB-UniRule"/>
</dbReference>
<dbReference type="GO" id="GO:0006351">
    <property type="term" value="P:DNA-templated transcription"/>
    <property type="evidence" value="ECO:0007669"/>
    <property type="project" value="UniProtKB-UniRule"/>
</dbReference>
<dbReference type="FunFam" id="3.90.940.10:FF:000001">
    <property type="entry name" value="DNA-directed RNA polymerase subunit omega"/>
    <property type="match status" value="1"/>
</dbReference>
<dbReference type="Gene3D" id="3.90.940.10">
    <property type="match status" value="1"/>
</dbReference>
<dbReference type="HAMAP" id="MF_00366">
    <property type="entry name" value="RNApol_bact_RpoZ"/>
    <property type="match status" value="1"/>
</dbReference>
<dbReference type="InterPro" id="IPR003716">
    <property type="entry name" value="DNA-dir_RNA_pol_omega"/>
</dbReference>
<dbReference type="InterPro" id="IPR006110">
    <property type="entry name" value="Pol_omega/Rpo6/RPB6"/>
</dbReference>
<dbReference type="InterPro" id="IPR036161">
    <property type="entry name" value="RPB6/omega-like_sf"/>
</dbReference>
<dbReference type="NCBIfam" id="TIGR00690">
    <property type="entry name" value="rpoZ"/>
    <property type="match status" value="1"/>
</dbReference>
<dbReference type="PANTHER" id="PTHR34476">
    <property type="entry name" value="DNA-DIRECTED RNA POLYMERASE SUBUNIT OMEGA"/>
    <property type="match status" value="1"/>
</dbReference>
<dbReference type="PANTHER" id="PTHR34476:SF1">
    <property type="entry name" value="DNA-DIRECTED RNA POLYMERASE SUBUNIT OMEGA"/>
    <property type="match status" value="1"/>
</dbReference>
<dbReference type="Pfam" id="PF01192">
    <property type="entry name" value="RNA_pol_Rpb6"/>
    <property type="match status" value="1"/>
</dbReference>
<dbReference type="SMART" id="SM01409">
    <property type="entry name" value="RNA_pol_Rpb6"/>
    <property type="match status" value="1"/>
</dbReference>
<dbReference type="SUPFAM" id="SSF63562">
    <property type="entry name" value="RPB6/omega subunit-like"/>
    <property type="match status" value="1"/>
</dbReference>
<reference key="1">
    <citation type="journal article" date="2009" name="BMC Genomics">
        <title>Pseudogene accumulation in the evolutionary histories of Salmonella enterica serovars Paratyphi A and Typhi.</title>
        <authorList>
            <person name="Holt K.E."/>
            <person name="Thomson N.R."/>
            <person name="Wain J."/>
            <person name="Langridge G.C."/>
            <person name="Hasan R."/>
            <person name="Bhutta Z.A."/>
            <person name="Quail M.A."/>
            <person name="Norbertczak H."/>
            <person name="Walker D."/>
            <person name="Simmonds M."/>
            <person name="White B."/>
            <person name="Bason N."/>
            <person name="Mungall K."/>
            <person name="Dougan G."/>
            <person name="Parkhill J."/>
        </authorList>
    </citation>
    <scope>NUCLEOTIDE SEQUENCE [LARGE SCALE GENOMIC DNA]</scope>
    <source>
        <strain>AKU_12601</strain>
    </source>
</reference>
<comment type="function">
    <text evidence="1">Promotes RNA polymerase assembly. Latches the N- and C-terminal regions of the beta' subunit thereby facilitating its interaction with the beta and alpha subunits.</text>
</comment>
<comment type="catalytic activity">
    <reaction evidence="1">
        <text>RNA(n) + a ribonucleoside 5'-triphosphate = RNA(n+1) + diphosphate</text>
        <dbReference type="Rhea" id="RHEA:21248"/>
        <dbReference type="Rhea" id="RHEA-COMP:14527"/>
        <dbReference type="Rhea" id="RHEA-COMP:17342"/>
        <dbReference type="ChEBI" id="CHEBI:33019"/>
        <dbReference type="ChEBI" id="CHEBI:61557"/>
        <dbReference type="ChEBI" id="CHEBI:140395"/>
        <dbReference type="EC" id="2.7.7.6"/>
    </reaction>
</comment>
<comment type="subunit">
    <text evidence="1">The RNAP catalytic core consists of 2 alpha, 1 beta, 1 beta' and 1 omega subunit. When a sigma factor is associated with the core the holoenzyme is formed, which can initiate transcription.</text>
</comment>
<comment type="similarity">
    <text evidence="1">Belongs to the RNA polymerase subunit omega family.</text>
</comment>
<keyword id="KW-0240">DNA-directed RNA polymerase</keyword>
<keyword id="KW-0548">Nucleotidyltransferase</keyword>
<keyword id="KW-0804">Transcription</keyword>
<keyword id="KW-0808">Transferase</keyword>
<protein>
    <recommendedName>
        <fullName evidence="1">DNA-directed RNA polymerase subunit omega</fullName>
        <shortName evidence="1">RNAP omega subunit</shortName>
        <ecNumber evidence="1">2.7.7.6</ecNumber>
    </recommendedName>
    <alternativeName>
        <fullName evidence="1">RNA polymerase omega subunit</fullName>
    </alternativeName>
    <alternativeName>
        <fullName evidence="1">Transcriptase subunit omega</fullName>
    </alternativeName>
</protein>
<gene>
    <name evidence="1" type="primary">rpoZ</name>
    <name type="ordered locus">SSPA3356</name>
</gene>
<proteinExistence type="inferred from homology"/>
<organism>
    <name type="scientific">Salmonella paratyphi A (strain AKU_12601)</name>
    <dbReference type="NCBI Taxonomy" id="554290"/>
    <lineage>
        <taxon>Bacteria</taxon>
        <taxon>Pseudomonadati</taxon>
        <taxon>Pseudomonadota</taxon>
        <taxon>Gammaproteobacteria</taxon>
        <taxon>Enterobacterales</taxon>
        <taxon>Enterobacteriaceae</taxon>
        <taxon>Salmonella</taxon>
    </lineage>
</organism>